<feature type="chain" id="PRO_1000196202" description="Large ribosomal subunit protein bL36">
    <location>
        <begin position="1"/>
        <end position="38"/>
    </location>
</feature>
<accession>B3R014</accession>
<protein>
    <recommendedName>
        <fullName evidence="1">Large ribosomal subunit protein bL36</fullName>
    </recommendedName>
    <alternativeName>
        <fullName evidence="2">50S ribosomal protein L36</fullName>
    </alternativeName>
</protein>
<proteinExistence type="inferred from homology"/>
<name>RL36_PHYMT</name>
<sequence>MKVRSSVKKRSPDDIIVRRKGRVYIINKKNRRHNQRQG</sequence>
<keyword id="KW-1185">Reference proteome</keyword>
<keyword id="KW-0687">Ribonucleoprotein</keyword>
<keyword id="KW-0689">Ribosomal protein</keyword>
<evidence type="ECO:0000255" key="1">
    <source>
        <dbReference type="HAMAP-Rule" id="MF_00251"/>
    </source>
</evidence>
<evidence type="ECO:0000305" key="2"/>
<gene>
    <name evidence="1" type="primary">rpmJ</name>
    <name type="ordered locus">ATP_00364</name>
</gene>
<comment type="similarity">
    <text evidence="1">Belongs to the bacterial ribosomal protein bL36 family.</text>
</comment>
<reference key="1">
    <citation type="journal article" date="2008" name="BMC Genomics">
        <title>The linear chromosome of the plant-pathogenic mycoplasma 'Candidatus Phytoplasma mali'.</title>
        <authorList>
            <person name="Kube M."/>
            <person name="Schneider B."/>
            <person name="Kuhl H."/>
            <person name="Dandekar T."/>
            <person name="Heitmann K."/>
            <person name="Migdoll A.M."/>
            <person name="Reinhardt R."/>
            <person name="Seemueller E."/>
        </authorList>
    </citation>
    <scope>NUCLEOTIDE SEQUENCE [LARGE SCALE GENOMIC DNA]</scope>
    <source>
        <strain>AT</strain>
    </source>
</reference>
<organism>
    <name type="scientific">Phytoplasma mali (strain AT)</name>
    <dbReference type="NCBI Taxonomy" id="482235"/>
    <lineage>
        <taxon>Bacteria</taxon>
        <taxon>Bacillati</taxon>
        <taxon>Mycoplasmatota</taxon>
        <taxon>Mollicutes</taxon>
        <taxon>Acholeplasmatales</taxon>
        <taxon>Acholeplasmataceae</taxon>
        <taxon>Candidatus Phytoplasma</taxon>
        <taxon>16SrX (Apple proliferation group)</taxon>
    </lineage>
</organism>
<dbReference type="EMBL" id="CU469464">
    <property type="protein sequence ID" value="CAP18551.1"/>
    <property type="molecule type" value="Genomic_DNA"/>
</dbReference>
<dbReference type="SMR" id="B3R014"/>
<dbReference type="STRING" id="37692.ATP_00364"/>
<dbReference type="KEGG" id="pml:ATP_00364"/>
<dbReference type="eggNOG" id="COG0257">
    <property type="taxonomic scope" value="Bacteria"/>
</dbReference>
<dbReference type="HOGENOM" id="CLU_135723_3_3_14"/>
<dbReference type="Proteomes" id="UP000002020">
    <property type="component" value="Chromosome"/>
</dbReference>
<dbReference type="GO" id="GO:1990904">
    <property type="term" value="C:ribonucleoprotein complex"/>
    <property type="evidence" value="ECO:0007669"/>
    <property type="project" value="UniProtKB-KW"/>
</dbReference>
<dbReference type="GO" id="GO:0005840">
    <property type="term" value="C:ribosome"/>
    <property type="evidence" value="ECO:0007669"/>
    <property type="project" value="UniProtKB-KW"/>
</dbReference>
<dbReference type="GO" id="GO:0003735">
    <property type="term" value="F:structural constituent of ribosome"/>
    <property type="evidence" value="ECO:0007669"/>
    <property type="project" value="InterPro"/>
</dbReference>
<dbReference type="GO" id="GO:0006412">
    <property type="term" value="P:translation"/>
    <property type="evidence" value="ECO:0007669"/>
    <property type="project" value="UniProtKB-UniRule"/>
</dbReference>
<dbReference type="HAMAP" id="MF_00251">
    <property type="entry name" value="Ribosomal_bL36"/>
    <property type="match status" value="1"/>
</dbReference>
<dbReference type="InterPro" id="IPR000473">
    <property type="entry name" value="Ribosomal_bL36"/>
</dbReference>
<dbReference type="InterPro" id="IPR035977">
    <property type="entry name" value="Ribosomal_bL36_sp"/>
</dbReference>
<dbReference type="InterPro" id="IPR052010">
    <property type="entry name" value="Ribosomal_LSU_bL36"/>
</dbReference>
<dbReference type="NCBIfam" id="TIGR01022">
    <property type="entry name" value="rpmJ_bact"/>
    <property type="match status" value="1"/>
</dbReference>
<dbReference type="PANTHER" id="PTHR18804">
    <property type="entry name" value="RIBOSOMAL PROTEIN"/>
    <property type="match status" value="1"/>
</dbReference>
<dbReference type="PANTHER" id="PTHR18804:SF16">
    <property type="entry name" value="RIBOSOMAL PROTEIN"/>
    <property type="match status" value="1"/>
</dbReference>
<dbReference type="Pfam" id="PF00444">
    <property type="entry name" value="Ribosomal_L36"/>
    <property type="match status" value="1"/>
</dbReference>
<dbReference type="SUPFAM" id="SSF57840">
    <property type="entry name" value="Ribosomal protein L36"/>
    <property type="match status" value="1"/>
</dbReference>
<dbReference type="PROSITE" id="PS00828">
    <property type="entry name" value="RIBOSOMAL_L36"/>
    <property type="match status" value="1"/>
</dbReference>